<name>GCSH_CHLL3</name>
<reference key="1">
    <citation type="submission" date="2005-08" db="EMBL/GenBank/DDBJ databases">
        <title>Complete sequence of Pelodictyon luteolum DSM 273.</title>
        <authorList>
            <consortium name="US DOE Joint Genome Institute"/>
            <person name="Copeland A."/>
            <person name="Lucas S."/>
            <person name="Lapidus A."/>
            <person name="Barry K."/>
            <person name="Detter J.C."/>
            <person name="Glavina T."/>
            <person name="Hammon N."/>
            <person name="Israni S."/>
            <person name="Pitluck S."/>
            <person name="Bryant D."/>
            <person name="Schmutz J."/>
            <person name="Larimer F."/>
            <person name="Land M."/>
            <person name="Kyrpides N."/>
            <person name="Ivanova N."/>
            <person name="Richardson P."/>
        </authorList>
    </citation>
    <scope>NUCLEOTIDE SEQUENCE [LARGE SCALE GENOMIC DNA]</scope>
    <source>
        <strain>DSM 273 / BCRC 81028 / 2530</strain>
    </source>
</reference>
<proteinExistence type="inferred from homology"/>
<keyword id="KW-0450">Lipoyl</keyword>
<keyword id="KW-1185">Reference proteome</keyword>
<feature type="chain" id="PRO_0000302406" description="Glycine cleavage system H protein">
    <location>
        <begin position="1"/>
        <end position="127"/>
    </location>
</feature>
<feature type="domain" description="Lipoyl-binding" evidence="2">
    <location>
        <begin position="24"/>
        <end position="105"/>
    </location>
</feature>
<feature type="modified residue" description="N6-lipoyllysine" evidence="1">
    <location>
        <position position="65"/>
    </location>
</feature>
<sequence>MNVPAALRYTKDHEWIQLLDDGATALVGITDFAQSELGDIVFVELKPAGTALKEHEIFGTVEAVKTVADLFAPVAGEILEVNAGLDSAETVNQDPYGSGWMVKMKLADPASVANLLDAAAYRELIGG</sequence>
<dbReference type="EMBL" id="CP000096">
    <property type="protein sequence ID" value="ABB24469.1"/>
    <property type="molecule type" value="Genomic_DNA"/>
</dbReference>
<dbReference type="RefSeq" id="WP_011358341.1">
    <property type="nucleotide sequence ID" value="NC_007512.1"/>
</dbReference>
<dbReference type="SMR" id="Q3B2G2"/>
<dbReference type="STRING" id="319225.Plut_1615"/>
<dbReference type="KEGG" id="plt:Plut_1615"/>
<dbReference type="eggNOG" id="COG0509">
    <property type="taxonomic scope" value="Bacteria"/>
</dbReference>
<dbReference type="HOGENOM" id="CLU_097408_2_2_10"/>
<dbReference type="OrthoDB" id="9796712at2"/>
<dbReference type="Proteomes" id="UP000002709">
    <property type="component" value="Chromosome"/>
</dbReference>
<dbReference type="GO" id="GO:0005737">
    <property type="term" value="C:cytoplasm"/>
    <property type="evidence" value="ECO:0007669"/>
    <property type="project" value="TreeGrafter"/>
</dbReference>
<dbReference type="GO" id="GO:0005960">
    <property type="term" value="C:glycine cleavage complex"/>
    <property type="evidence" value="ECO:0007669"/>
    <property type="project" value="InterPro"/>
</dbReference>
<dbReference type="GO" id="GO:0019464">
    <property type="term" value="P:glycine decarboxylation via glycine cleavage system"/>
    <property type="evidence" value="ECO:0007669"/>
    <property type="project" value="UniProtKB-UniRule"/>
</dbReference>
<dbReference type="CDD" id="cd06848">
    <property type="entry name" value="GCS_H"/>
    <property type="match status" value="1"/>
</dbReference>
<dbReference type="Gene3D" id="2.40.50.100">
    <property type="match status" value="1"/>
</dbReference>
<dbReference type="HAMAP" id="MF_00272">
    <property type="entry name" value="GcvH"/>
    <property type="match status" value="1"/>
</dbReference>
<dbReference type="InterPro" id="IPR003016">
    <property type="entry name" value="2-oxoA_DH_lipoyl-BS"/>
</dbReference>
<dbReference type="InterPro" id="IPR000089">
    <property type="entry name" value="Biotin_lipoyl"/>
</dbReference>
<dbReference type="InterPro" id="IPR002930">
    <property type="entry name" value="GCV_H"/>
</dbReference>
<dbReference type="InterPro" id="IPR033753">
    <property type="entry name" value="GCV_H/Fam206"/>
</dbReference>
<dbReference type="InterPro" id="IPR017453">
    <property type="entry name" value="GCV_H_sub"/>
</dbReference>
<dbReference type="InterPro" id="IPR011053">
    <property type="entry name" value="Single_hybrid_motif"/>
</dbReference>
<dbReference type="NCBIfam" id="TIGR00527">
    <property type="entry name" value="gcvH"/>
    <property type="match status" value="1"/>
</dbReference>
<dbReference type="NCBIfam" id="NF002270">
    <property type="entry name" value="PRK01202.1"/>
    <property type="match status" value="1"/>
</dbReference>
<dbReference type="PANTHER" id="PTHR11715">
    <property type="entry name" value="GLYCINE CLEAVAGE SYSTEM H PROTEIN"/>
    <property type="match status" value="1"/>
</dbReference>
<dbReference type="PANTHER" id="PTHR11715:SF3">
    <property type="entry name" value="GLYCINE CLEAVAGE SYSTEM H PROTEIN-RELATED"/>
    <property type="match status" value="1"/>
</dbReference>
<dbReference type="Pfam" id="PF01597">
    <property type="entry name" value="GCV_H"/>
    <property type="match status" value="1"/>
</dbReference>
<dbReference type="SUPFAM" id="SSF51230">
    <property type="entry name" value="Single hybrid motif"/>
    <property type="match status" value="1"/>
</dbReference>
<dbReference type="PROSITE" id="PS50968">
    <property type="entry name" value="BIOTINYL_LIPOYL"/>
    <property type="match status" value="1"/>
</dbReference>
<dbReference type="PROSITE" id="PS00189">
    <property type="entry name" value="LIPOYL"/>
    <property type="match status" value="1"/>
</dbReference>
<protein>
    <recommendedName>
        <fullName evidence="1">Glycine cleavage system H protein</fullName>
    </recommendedName>
</protein>
<gene>
    <name evidence="1" type="primary">gcvH</name>
    <name type="ordered locus">Plut_1615</name>
</gene>
<evidence type="ECO:0000255" key="1">
    <source>
        <dbReference type="HAMAP-Rule" id="MF_00272"/>
    </source>
</evidence>
<evidence type="ECO:0000255" key="2">
    <source>
        <dbReference type="PROSITE-ProRule" id="PRU01066"/>
    </source>
</evidence>
<organism>
    <name type="scientific">Chlorobium luteolum (strain DSM 273 / BCRC 81028 / 2530)</name>
    <name type="common">Pelodictyon luteolum</name>
    <dbReference type="NCBI Taxonomy" id="319225"/>
    <lineage>
        <taxon>Bacteria</taxon>
        <taxon>Pseudomonadati</taxon>
        <taxon>Chlorobiota</taxon>
        <taxon>Chlorobiia</taxon>
        <taxon>Chlorobiales</taxon>
        <taxon>Chlorobiaceae</taxon>
        <taxon>Chlorobium/Pelodictyon group</taxon>
        <taxon>Pelodictyon</taxon>
    </lineage>
</organism>
<accession>Q3B2G2</accession>
<comment type="function">
    <text evidence="1">The glycine cleavage system catalyzes the degradation of glycine. The H protein shuttles the methylamine group of glycine from the P protein to the T protein.</text>
</comment>
<comment type="cofactor">
    <cofactor evidence="1">
        <name>(R)-lipoate</name>
        <dbReference type="ChEBI" id="CHEBI:83088"/>
    </cofactor>
    <text evidence="1">Binds 1 lipoyl cofactor covalently.</text>
</comment>
<comment type="subunit">
    <text evidence="1">The glycine cleavage system is composed of four proteins: P, T, L and H.</text>
</comment>
<comment type="similarity">
    <text evidence="1">Belongs to the GcvH family.</text>
</comment>